<comment type="function">
    <text evidence="3">Hydroxycinnamoyl transferase that catalyzes the transfer of an acyl from p-coumaryol-CoA to putrescine, to produce coumaroyl putrescine.</text>
</comment>
<comment type="tissue specificity">
    <text evidence="2">Expressed in leaves.</text>
</comment>
<comment type="similarity">
    <text evidence="6">Belongs to the plant acyltransferase family.</text>
</comment>
<accession>Q5SMM8</accession>
<gene>
    <name evidence="5" type="primary">PHT1</name>
    <name evidence="4" type="synonym">HCT3</name>
    <name evidence="8" type="ordered locus">Os06g0184900</name>
    <name evidence="6" type="ordered locus">LOC_Os06g08580</name>
    <name evidence="7" type="ORF">P0554A06.23</name>
</gene>
<reference key="1">
    <citation type="journal article" date="2005" name="Nature">
        <title>The map-based sequence of the rice genome.</title>
        <authorList>
            <consortium name="International rice genome sequencing project (IRGSP)"/>
        </authorList>
    </citation>
    <scope>NUCLEOTIDE SEQUENCE [LARGE SCALE GENOMIC DNA]</scope>
    <source>
        <strain>cv. Nipponbare</strain>
    </source>
</reference>
<reference key="2">
    <citation type="journal article" date="2008" name="Nucleic Acids Res.">
        <title>The rice annotation project database (RAP-DB): 2008 update.</title>
        <authorList>
            <consortium name="The rice annotation project (RAP)"/>
        </authorList>
    </citation>
    <scope>GENOME REANNOTATION</scope>
    <source>
        <strain>cv. Nipponbare</strain>
    </source>
</reference>
<reference key="3">
    <citation type="journal article" date="2013" name="Rice">
        <title>Improvement of the Oryza sativa Nipponbare reference genome using next generation sequence and optical map data.</title>
        <authorList>
            <person name="Kawahara Y."/>
            <person name="de la Bastide M."/>
            <person name="Hamilton J.P."/>
            <person name="Kanamori H."/>
            <person name="McCombie W.R."/>
            <person name="Ouyang S."/>
            <person name="Schwartz D.C."/>
            <person name="Tanaka T."/>
            <person name="Wu J."/>
            <person name="Zhou S."/>
            <person name="Childs K.L."/>
            <person name="Davidson R.M."/>
            <person name="Lin H."/>
            <person name="Quesada-Ocampo L."/>
            <person name="Vaillancourt B."/>
            <person name="Sakai H."/>
            <person name="Lee S.S."/>
            <person name="Kim J."/>
            <person name="Numa H."/>
            <person name="Itoh T."/>
            <person name="Buell C.R."/>
            <person name="Matsumoto T."/>
        </authorList>
    </citation>
    <scope>GENOME REANNOTATION</scope>
    <source>
        <strain>cv. Nipponbare</strain>
    </source>
</reference>
<reference key="4">
    <citation type="journal article" date="2003" name="Science">
        <title>Collection, mapping, and annotation of over 28,000 cDNA clones from japonica rice.</title>
        <authorList>
            <consortium name="The rice full-length cDNA consortium"/>
        </authorList>
    </citation>
    <scope>NUCLEOTIDE SEQUENCE [LARGE SCALE MRNA]</scope>
    <source>
        <strain>cv. Nipponbare</strain>
    </source>
</reference>
<reference key="5">
    <citation type="journal article" date="2012" name="Phytochemistry">
        <title>Characterization of hydroxycinnamoyltransferase from rice and its application for biological synthesis of hydroxycinnamoyl glycerols.</title>
        <authorList>
            <person name="Kim I.A."/>
            <person name="Kim B.G."/>
            <person name="Kim M."/>
            <person name="Ahn J.H."/>
        </authorList>
    </citation>
    <scope>TISSUE SPECIFICITY</scope>
</reference>
<reference key="6">
    <citation type="journal article" date="2016" name="Plant Cell">
        <title>Evolutionarily distinct BAHD N-acyltransferases are responsible for natural variation of aromatic amine conjugates in rice.</title>
        <authorList>
            <person name="Peng M."/>
            <person name="Gao Y."/>
            <person name="Chen W."/>
            <person name="Wang W."/>
            <person name="Shen S."/>
            <person name="Shi J."/>
            <person name="Wang C."/>
            <person name="Zhang Y."/>
            <person name="Zou L."/>
            <person name="Wang S."/>
            <person name="Wan J."/>
            <person name="Liu X."/>
            <person name="Gong L."/>
            <person name="Luo J."/>
        </authorList>
    </citation>
    <scope>FUNCTION</scope>
</reference>
<feature type="chain" id="PRO_0000437756" description="Putrescine hydroxycinnamoyltransferase 1">
    <location>
        <begin position="1"/>
        <end position="445"/>
    </location>
</feature>
<feature type="active site" description="Proton acceptor" evidence="1">
    <location>
        <position position="154"/>
    </location>
</feature>
<feature type="active site" description="Proton acceptor" evidence="1">
    <location>
        <position position="388"/>
    </location>
</feature>
<protein>
    <recommendedName>
        <fullName evidence="6">Putrescine hydroxycinnamoyltransferase 1</fullName>
        <shortName evidence="5">OsPHT1</shortName>
        <ecNumber evidence="6">2.3.1.-</ecNumber>
    </recommendedName>
    <alternativeName>
        <fullName evidence="6">BAHD-like hydroxycinnamoyl transferase HCT3</fullName>
    </alternativeName>
    <alternativeName>
        <fullName evidence="6">Hydroxycinnamoyltransferase 3</fullName>
        <shortName evidence="4">OsHCT3</shortName>
    </alternativeName>
</protein>
<dbReference type="EC" id="2.3.1.-" evidence="6"/>
<dbReference type="EMBL" id="AP005919">
    <property type="protein sequence ID" value="BAD72525.1"/>
    <property type="molecule type" value="Genomic_DNA"/>
</dbReference>
<dbReference type="EMBL" id="AP008212">
    <property type="protein sequence ID" value="BAF18912.1"/>
    <property type="molecule type" value="Genomic_DNA"/>
</dbReference>
<dbReference type="EMBL" id="AP014962">
    <property type="protein sequence ID" value="BAS96506.1"/>
    <property type="molecule type" value="Genomic_DNA"/>
</dbReference>
<dbReference type="EMBL" id="AK109842">
    <property type="protein sequence ID" value="BAG98925.1"/>
    <property type="molecule type" value="mRNA"/>
</dbReference>
<dbReference type="RefSeq" id="XP_015643300.1">
    <property type="nucleotide sequence ID" value="XM_015787814.1"/>
</dbReference>
<dbReference type="SMR" id="Q5SMM8"/>
<dbReference type="FunCoup" id="Q5SMM8">
    <property type="interactions" value="174"/>
</dbReference>
<dbReference type="STRING" id="39947.Q5SMM8"/>
<dbReference type="PaxDb" id="39947-Q5SMM8"/>
<dbReference type="EnsemblPlants" id="Os06t0184900-01">
    <property type="protein sequence ID" value="Os06t0184900-01"/>
    <property type="gene ID" value="Os06g0184900"/>
</dbReference>
<dbReference type="Gramene" id="Os06t0184900-01">
    <property type="protein sequence ID" value="Os06t0184900-01"/>
    <property type="gene ID" value="Os06g0184900"/>
</dbReference>
<dbReference type="KEGG" id="dosa:Os06g0184900"/>
<dbReference type="eggNOG" id="ENOG502QTJX">
    <property type="taxonomic scope" value="Eukaryota"/>
</dbReference>
<dbReference type="HOGENOM" id="CLU_014546_2_0_1"/>
<dbReference type="InParanoid" id="Q5SMM8"/>
<dbReference type="OMA" id="TEVANHK"/>
<dbReference type="OrthoDB" id="671439at2759"/>
<dbReference type="Proteomes" id="UP000000763">
    <property type="component" value="Chromosome 6"/>
</dbReference>
<dbReference type="Proteomes" id="UP000059680">
    <property type="component" value="Chromosome 6"/>
</dbReference>
<dbReference type="ExpressionAtlas" id="Q5SMM8">
    <property type="expression patterns" value="baseline and differential"/>
</dbReference>
<dbReference type="GO" id="GO:0016747">
    <property type="term" value="F:acyltransferase activity, transferring groups other than amino-acyl groups"/>
    <property type="evidence" value="ECO:0000318"/>
    <property type="project" value="GO_Central"/>
</dbReference>
<dbReference type="GO" id="GO:0050734">
    <property type="term" value="F:hydroxycinnamoyltransferase activity"/>
    <property type="evidence" value="ECO:0000314"/>
    <property type="project" value="UniProtKB"/>
</dbReference>
<dbReference type="FunFam" id="3.30.559.10:FF:000015">
    <property type="entry name" value="Spermidine hydroxycinnamoyl transferase"/>
    <property type="match status" value="1"/>
</dbReference>
<dbReference type="FunFam" id="3.30.559.10:FF:000008">
    <property type="entry name" value="Tryptamine hydroxycinnamoyl transferase"/>
    <property type="match status" value="1"/>
</dbReference>
<dbReference type="Gene3D" id="3.30.559.10">
    <property type="entry name" value="Chloramphenicol acetyltransferase-like domain"/>
    <property type="match status" value="2"/>
</dbReference>
<dbReference type="InterPro" id="IPR023213">
    <property type="entry name" value="CAT-like_dom_sf"/>
</dbReference>
<dbReference type="InterPro" id="IPR050317">
    <property type="entry name" value="Plant_Fungal_Acyltransferase"/>
</dbReference>
<dbReference type="PANTHER" id="PTHR31642:SF138">
    <property type="entry name" value="PUTRESCINE HYDROXYCINNAMOYLTRANSFERASE 1"/>
    <property type="match status" value="1"/>
</dbReference>
<dbReference type="PANTHER" id="PTHR31642">
    <property type="entry name" value="TRICHOTHECENE 3-O-ACETYLTRANSFERASE"/>
    <property type="match status" value="1"/>
</dbReference>
<dbReference type="Pfam" id="PF02458">
    <property type="entry name" value="Transferase"/>
    <property type="match status" value="1"/>
</dbReference>
<sequence>MAVEIVKSSMVTAGEATPEHRIWLSNLDLLVARSHTPTVYVYRRTGPDSDAAFFSPDVLKAALSKVLVPFYPLAGRLAQDSAGRPEISCTGEGVLFVTARSGATIDDLGDLAPSDELRRMLVPAADVAAASILAMFQVTFFRCGGVCLGAAIHHTAADGLAALDFVNTWAAIARDVAGDGEAAAAAVQRPWLDRTLLRARSPPAVRFDHAEYSRRRGGGSKLPFDSAILPMSKNQLNALKGAGAGAGKRLSTFTAVVAHVWRCACKARGLAVAGTEAATRLYMTADARTRLHPPLPRGYLGNAIFRASAVSKVSDIVAAGPLGAVAEKVSAATARLDDGYVRSLLDHLEQTAAAASGGAAGLRKGEWVMPESDLWVISWQGLPLYDADFGWGRPAFMGRACLQFSGLVYLVPGRDDGDGRLDVVVAMDPESLAKFKDVFYEELKC</sequence>
<keyword id="KW-0012">Acyltransferase</keyword>
<keyword id="KW-1185">Reference proteome</keyword>
<keyword id="KW-0808">Transferase</keyword>
<organism>
    <name type="scientific">Oryza sativa subsp. japonica</name>
    <name type="common">Rice</name>
    <dbReference type="NCBI Taxonomy" id="39947"/>
    <lineage>
        <taxon>Eukaryota</taxon>
        <taxon>Viridiplantae</taxon>
        <taxon>Streptophyta</taxon>
        <taxon>Embryophyta</taxon>
        <taxon>Tracheophyta</taxon>
        <taxon>Spermatophyta</taxon>
        <taxon>Magnoliopsida</taxon>
        <taxon>Liliopsida</taxon>
        <taxon>Poales</taxon>
        <taxon>Poaceae</taxon>
        <taxon>BOP clade</taxon>
        <taxon>Oryzoideae</taxon>
        <taxon>Oryzeae</taxon>
        <taxon>Oryzinae</taxon>
        <taxon>Oryza</taxon>
        <taxon>Oryza sativa</taxon>
    </lineage>
</organism>
<proteinExistence type="evidence at transcript level"/>
<evidence type="ECO:0000250" key="1">
    <source>
        <dbReference type="UniProtKB" id="Q8W1W9"/>
    </source>
</evidence>
<evidence type="ECO:0000269" key="2">
    <source>
    </source>
</evidence>
<evidence type="ECO:0000269" key="3">
    <source>
    </source>
</evidence>
<evidence type="ECO:0000303" key="4">
    <source>
    </source>
</evidence>
<evidence type="ECO:0000303" key="5">
    <source>
    </source>
</evidence>
<evidence type="ECO:0000305" key="6"/>
<evidence type="ECO:0000312" key="7">
    <source>
        <dbReference type="EMBL" id="BAD72525.1"/>
    </source>
</evidence>
<evidence type="ECO:0000312" key="8">
    <source>
        <dbReference type="EMBL" id="BAF18912.1"/>
    </source>
</evidence>
<name>PHT1_ORYSJ</name>